<evidence type="ECO:0000269" key="1">
    <source>
    </source>
</evidence>
<evidence type="ECO:0000269" key="2">
    <source>
    </source>
</evidence>
<evidence type="ECO:0000269" key="3">
    <source>
    </source>
</evidence>
<evidence type="ECO:0000269" key="4">
    <source>
    </source>
</evidence>
<evidence type="ECO:0000303" key="5">
    <source>
    </source>
</evidence>
<evidence type="ECO:0000303" key="6">
    <source>
    </source>
</evidence>
<evidence type="ECO:0000305" key="7">
    <source>
    </source>
</evidence>
<evidence type="ECO:0000305" key="8">
    <source>
    </source>
</evidence>
<evidence type="ECO:0000305" key="9">
    <source>
    </source>
</evidence>
<evidence type="ECO:0000305" key="10">
    <source>
    </source>
</evidence>
<evidence type="ECO:0000312" key="11">
    <source>
        <dbReference type="EMBL" id="AAM54048.1"/>
    </source>
</evidence>
<organism>
    <name type="scientific">Ornithodoros kalahariensis</name>
    <name type="common">Tick</name>
    <dbReference type="NCBI Taxonomy" id="1580572"/>
    <lineage>
        <taxon>Eukaryota</taxon>
        <taxon>Metazoa</taxon>
        <taxon>Ecdysozoa</taxon>
        <taxon>Arthropoda</taxon>
        <taxon>Chelicerata</taxon>
        <taxon>Arachnida</taxon>
        <taxon>Acari</taxon>
        <taxon>Parasitiformes</taxon>
        <taxon>Ixodida</taxon>
        <taxon>Ixodoidea</taxon>
        <taxon>Argasidae</taxon>
        <taxon>Ornithodorinae</taxon>
        <taxon>Ornithodoros</taxon>
    </lineage>
</organism>
<accession>Q8MVZ2</accession>
<name>KUNPM_ORNKA</name>
<sequence length="82" mass="9043">MQANIFVFAFLLLSVAVAAYGYQPECLEPSLYGCRGDEDATFGWTFDREDGGCRQGSYCTRFGQPKNYFRSEGDCKKACGGA</sequence>
<comment type="function">
    <text evidence="1 2 3 7 8 9">Tick salivary platelet aggregation inhibitor that plays an important part in the anti-hemostatic strategy of ticks (PubMed:11932256). Inhibits platelet aggregation induced by ADP (IC(50)=130 nM), collagen, the thrombin receptor-activating peptide, and epinephrine, although platelets are activated and their shape changed (PubMed:11932256). Binding to platelets is similar for resting and activated platelets (Kd=50-70 nM) (PubMed:15147758). Acts by specifically binding to platelet membrane glycoprotein IIb-IIIa (ITGA2B/ITGB3) in a divalent metal ion dependent manner (Probable) (PubMed:15147758). In contrast to many disintegrins which only interacts with the beta-3 subunit, this protein interacts with the two subunits (alpha-IIb and beta-3) (Probable). Also causes disaggregation of aggregated platelets without influencing the activated spherical shape associated with aggregated platelets and causes a decrease in the number of pseudopodia on the activated platelet surface (PubMed:12593588). Does not show any inhibitory activity for the different serine proteases tested (PubMed:11932256).</text>
</comment>
<comment type="subcellular location">
    <subcellularLocation>
        <location evidence="4">Cytoplasmic vesicle</location>
        <location evidence="4">Secretory vesicle</location>
    </subcellularLocation>
    <subcellularLocation>
        <location evidence="7 10">Secreted</location>
    </subcellularLocation>
    <text evidence="4">Before secretion, is localized to dense core granule type 'a' and to granule type 'b', but not to granules 'c' or 'd'.</text>
</comment>
<comment type="tissue specificity">
    <text evidence="4">Expressed in salivary glands.</text>
</comment>
<comment type="mass spectrometry" mass="6808.84" method="Electrospray" evidence="1"/>
<keyword id="KW-1217">Cell adhesion impairing toxin</keyword>
<keyword id="KW-0968">Cytoplasmic vesicle</keyword>
<keyword id="KW-0903">Direct protein sequencing</keyword>
<keyword id="KW-1015">Disulfide bond</keyword>
<keyword id="KW-1199">Hemostasis impairing toxin</keyword>
<keyword id="KW-1201">Platelet aggregation inhibiting toxin</keyword>
<keyword id="KW-0964">Secreted</keyword>
<keyword id="KW-0732">Signal</keyword>
<keyword id="KW-0800">Toxin</keyword>
<reference evidence="11" key="1">
    <citation type="journal article" date="2002" name="J. Biol. Chem.">
        <title>Savignygrin, a platelet aggregation inhibitor from the soft tick Ornithodoros savignyi, presents the RGD integrin recognition motif on the Kunitz-BPTI fold.</title>
        <authorList>
            <person name="Mans B.J."/>
            <person name="Louw A.I."/>
            <person name="Neitz A.W."/>
        </authorList>
    </citation>
    <scope>NUCLEOTIDE SEQUENCE [MRNA]</scope>
    <scope>PROTEIN SEQUENCE OF 22-42</scope>
    <scope>FUNCTION</scope>
    <scope>MASS SPECTROMETRY</scope>
    <scope>3D-STRUCTURE MODELING</scope>
    <source>
        <tissue>Salivary gland</tissue>
    </source>
</reference>
<reference key="2">
    <citation type="journal article" date="2002" name="Exp. Appl. Acarol.">
        <title>Disaggregation of aggregated platelets by savignygrin, a alphaIIbeta3 antagonist from Ornithodoros savignyi.</title>
        <authorList>
            <person name="Mans B.J."/>
            <person name="Louw A.I."/>
            <person name="Neitz A.W."/>
        </authorList>
    </citation>
    <scope>FUNCTION</scope>
</reference>
<reference key="3">
    <citation type="journal article" date="2004" name="Exp. Appl. Acarol.">
        <title>A reassessment of argasid tick salivary gland ultrastructure from an immuno-cytochemical perspective.</title>
        <authorList>
            <person name="Mans B.J."/>
            <person name="Venter J.D."/>
            <person name="Coons L.B."/>
            <person name="Louw A.I."/>
            <person name="Neitz A.W."/>
        </authorList>
    </citation>
    <scope>TISSUE SPECIFICITY</scope>
    <scope>SUBCELLULAR LOCATION</scope>
    <source>
        <tissue>Salivary gland</tissue>
    </source>
</reference>
<reference key="4">
    <citation type="journal article" date="2004" name="Insect Biochem. Mol. Biol.">
        <title>The mechanism of alphaIIbbeta3 antagonism by savignygrin and its implications for the evolution of anti-hemostatic strategies in soft ticks.</title>
        <authorList>
            <person name="Mans B.J."/>
            <person name="Neitz A.W."/>
        </authorList>
    </citation>
    <scope>FUNCTION</scope>
    <scope>3D-STRUCTURE MODELING IN COMPLEX WITH INTEGRIN ITGA2B/ITGB3</scope>
    <source>
        <tissue>Salivary gland</tissue>
    </source>
</reference>
<feature type="signal peptide" evidence="7">
    <location>
        <begin position="1"/>
        <end position="21"/>
    </location>
</feature>
<feature type="chain" id="PRO_5004314105" description="Savignygrin (-)" evidence="7">
    <location>
        <begin position="22"/>
        <end position="82"/>
    </location>
</feature>
<feature type="short sequence motif" description="Cell attachment site" evidence="1">
    <location>
        <begin position="35"/>
        <end position="37"/>
    </location>
</feature>
<feature type="disulfide bond" evidence="7">
    <location>
        <begin position="26"/>
        <end position="79"/>
    </location>
</feature>
<feature type="disulfide bond" evidence="7">
    <location>
        <begin position="34"/>
        <end position="59"/>
    </location>
</feature>
<feature type="disulfide bond" evidence="7">
    <location>
        <begin position="53"/>
        <end position="75"/>
    </location>
</feature>
<dbReference type="EMBL" id="AF452886">
    <property type="protein sequence ID" value="AAM54048.1"/>
    <property type="molecule type" value="mRNA"/>
</dbReference>
<dbReference type="SMR" id="Q8MVZ2"/>
<dbReference type="GO" id="GO:0005576">
    <property type="term" value="C:extracellular region"/>
    <property type="evidence" value="ECO:0007669"/>
    <property type="project" value="UniProtKB-SubCell"/>
</dbReference>
<dbReference type="GO" id="GO:0030133">
    <property type="term" value="C:transport vesicle"/>
    <property type="evidence" value="ECO:0007669"/>
    <property type="project" value="UniProtKB-SubCell"/>
</dbReference>
<dbReference type="GO" id="GO:0004867">
    <property type="term" value="F:serine-type endopeptidase inhibitor activity"/>
    <property type="evidence" value="ECO:0007669"/>
    <property type="project" value="InterPro"/>
</dbReference>
<dbReference type="GO" id="GO:0090729">
    <property type="term" value="F:toxin activity"/>
    <property type="evidence" value="ECO:0007669"/>
    <property type="project" value="UniProtKB-KW"/>
</dbReference>
<dbReference type="Gene3D" id="4.10.410.10">
    <property type="entry name" value="Pancreatic trypsin inhibitor Kunitz domain"/>
    <property type="match status" value="1"/>
</dbReference>
<dbReference type="InterPro" id="IPR036880">
    <property type="entry name" value="Kunitz_BPTI_sf"/>
</dbReference>
<dbReference type="SUPFAM" id="SSF57362">
    <property type="entry name" value="BPTI-like"/>
    <property type="match status" value="1"/>
</dbReference>
<protein>
    <recommendedName>
        <fullName evidence="5 6">Savignygrin (-)</fullName>
    </recommendedName>
    <alternativeName>
        <fullName evidence="5">Platelet aggregation inhibitor</fullName>
        <shortName evidence="5">PAI</shortName>
    </alternativeName>
</protein>
<proteinExistence type="evidence at protein level"/>